<accession>O09163</accession>
<gene>
    <name type="primary">GNRH1</name>
    <name type="synonym">GNRH</name>
    <name type="synonym">LHRH</name>
</gene>
<feature type="chain" id="PRO_0000012401" description="Progonadoliberin-1">
    <location>
        <begin position="1"/>
        <end position="63" status="greater than"/>
    </location>
</feature>
<feature type="peptide" id="PRO_0000012402" description="Gonadoliberin-1">
    <location>
        <begin position="1"/>
        <end position="10"/>
    </location>
</feature>
<feature type="peptide" id="PRO_0000012403" description="GnRH-associated peptide 1" evidence="1">
    <location>
        <begin position="14"/>
        <end position="63" status="greater than"/>
    </location>
</feature>
<feature type="site" description="Cleavage; by ACE" evidence="2">
    <location>
        <begin position="3"/>
        <end position="4"/>
    </location>
</feature>
<feature type="site" description="Appears to be essential for biological activity" evidence="1">
    <location>
        <position position="3"/>
    </location>
</feature>
<feature type="site" description="Cleavage; by ACE" evidence="2">
    <location>
        <begin position="5"/>
        <end position="6"/>
    </location>
</feature>
<feature type="site" description="Cleavage; by ACE" evidence="2">
    <location>
        <begin position="7"/>
        <end position="8"/>
    </location>
</feature>
<feature type="site" description="Cleavage; by ACE" evidence="2">
    <location>
        <begin position="10"/>
        <end position="11"/>
    </location>
</feature>
<feature type="modified residue" description="Pyrrolidone carboxylic acid" evidence="2">
    <location>
        <position position="1"/>
    </location>
</feature>
<feature type="modified residue" description="Glycine amide" evidence="1">
    <location>
        <position position="10"/>
    </location>
</feature>
<feature type="non-terminal residue">
    <location>
        <position position="1"/>
    </location>
</feature>
<feature type="non-terminal residue">
    <location>
        <position position="63"/>
    </location>
</feature>
<proteinExistence type="evidence at transcript level"/>
<sequence>QHWSYGLRPGGKRNAERLGDSFQEMDKEVDQLAEPQHLECTVHWPRSPLRDLRGVLESLIEEE</sequence>
<reference key="1">
    <citation type="submission" date="1997-03" db="EMBL/GenBank/DDBJ databases">
        <authorList>
            <person name="Jansen H.T."/>
            <person name="Stevens P.J."/>
            <person name="Zeitler P."/>
            <person name="Lehman M.N."/>
        </authorList>
    </citation>
    <scope>NUCLEOTIDE SEQUENCE [MRNA]</scope>
</reference>
<keyword id="KW-0027">Amidation</keyword>
<keyword id="KW-0165">Cleavage on pair of basic residues</keyword>
<keyword id="KW-0372">Hormone</keyword>
<keyword id="KW-0873">Pyrrolidone carboxylic acid</keyword>
<keyword id="KW-1185">Reference proteome</keyword>
<keyword id="KW-0964">Secreted</keyword>
<dbReference type="EMBL" id="U91938">
    <property type="protein sequence ID" value="AAB51302.1"/>
    <property type="molecule type" value="mRNA"/>
</dbReference>
<dbReference type="STRING" id="10036.ENSMAUP00000006233"/>
<dbReference type="eggNOG" id="ENOG502S8C8">
    <property type="taxonomic scope" value="Eukaryota"/>
</dbReference>
<dbReference type="Proteomes" id="UP000189706">
    <property type="component" value="Unplaced"/>
</dbReference>
<dbReference type="GO" id="GO:0005615">
    <property type="term" value="C:extracellular space"/>
    <property type="evidence" value="ECO:0000250"/>
    <property type="project" value="UniProtKB"/>
</dbReference>
<dbReference type="GO" id="GO:0005183">
    <property type="term" value="F:gonadotropin hormone-releasing hormone activity"/>
    <property type="evidence" value="ECO:0007669"/>
    <property type="project" value="InterPro"/>
</dbReference>
<dbReference type="GO" id="GO:0031530">
    <property type="term" value="F:gonadotropin-releasing hormone receptor binding"/>
    <property type="evidence" value="ECO:0007669"/>
    <property type="project" value="TreeGrafter"/>
</dbReference>
<dbReference type="InterPro" id="IPR002012">
    <property type="entry name" value="GnRH"/>
</dbReference>
<dbReference type="InterPro" id="IPR019792">
    <property type="entry name" value="Gonadoliberin"/>
</dbReference>
<dbReference type="InterPro" id="IPR004079">
    <property type="entry name" value="Gonadoliberin_I_precursor"/>
</dbReference>
<dbReference type="PANTHER" id="PTHR10522">
    <property type="entry name" value="GONADOLIBERIN"/>
    <property type="match status" value="1"/>
</dbReference>
<dbReference type="PANTHER" id="PTHR10522:SF0">
    <property type="entry name" value="PROGONADOLIBERIN-1"/>
    <property type="match status" value="1"/>
</dbReference>
<dbReference type="Pfam" id="PF00446">
    <property type="entry name" value="GnRH"/>
    <property type="match status" value="1"/>
</dbReference>
<dbReference type="PRINTS" id="PR01541">
    <property type="entry name" value="GONADOLIBRNI"/>
</dbReference>
<dbReference type="PROSITE" id="PS00473">
    <property type="entry name" value="GNRH"/>
    <property type="match status" value="1"/>
</dbReference>
<organism>
    <name type="scientific">Mesocricetus auratus</name>
    <name type="common">Golden hamster</name>
    <dbReference type="NCBI Taxonomy" id="10036"/>
    <lineage>
        <taxon>Eukaryota</taxon>
        <taxon>Metazoa</taxon>
        <taxon>Chordata</taxon>
        <taxon>Craniata</taxon>
        <taxon>Vertebrata</taxon>
        <taxon>Euteleostomi</taxon>
        <taxon>Mammalia</taxon>
        <taxon>Eutheria</taxon>
        <taxon>Euarchontoglires</taxon>
        <taxon>Glires</taxon>
        <taxon>Rodentia</taxon>
        <taxon>Myomorpha</taxon>
        <taxon>Muroidea</taxon>
        <taxon>Cricetidae</taxon>
        <taxon>Cricetinae</taxon>
        <taxon>Mesocricetus</taxon>
    </lineage>
</organism>
<name>GON1_MESAU</name>
<evidence type="ECO:0000250" key="1"/>
<evidence type="ECO:0000250" key="2">
    <source>
        <dbReference type="UniProtKB" id="P01148"/>
    </source>
</evidence>
<evidence type="ECO:0000305" key="3"/>
<protein>
    <recommendedName>
        <fullName>Progonadoliberin-1</fullName>
    </recommendedName>
    <alternativeName>
        <fullName>Progonadoliberin I</fullName>
    </alternativeName>
    <component>
        <recommendedName>
            <fullName>Gonadoliberin-1</fullName>
        </recommendedName>
        <alternativeName>
            <fullName>Gonadoliberin I</fullName>
        </alternativeName>
        <alternativeName>
            <fullName>Gonadotropin-releasing hormone I</fullName>
            <shortName>GnRH-I</shortName>
        </alternativeName>
        <alternativeName>
            <fullName>Luliberin I</fullName>
        </alternativeName>
        <alternativeName>
            <fullName>Luteinizing hormone-releasing hormone I</fullName>
            <shortName>LH-RH I</shortName>
        </alternativeName>
    </component>
    <component>
        <recommendedName>
            <fullName>GnRH-associated peptide 1</fullName>
        </recommendedName>
        <alternativeName>
            <fullName>GnRH-associated peptide I</fullName>
        </alternativeName>
    </component>
</protein>
<comment type="function">
    <text>Stimulates the secretion of gonadotropins; it stimulates the secretion of both luteinizing and follicle-stimulating hormones.</text>
</comment>
<comment type="subcellular location">
    <subcellularLocation>
        <location>Secreted</location>
    </subcellularLocation>
</comment>
<comment type="PTM">
    <molecule>Gonadoliberin-1</molecule>
    <text evidence="2">The precursor is cleaved by ACE, which removes the Gly-Lys-Arg peptide at the C-terminus, leading to mature hormone. The mature form of Gonadoliberin-1 is also cleaved and degraded by ACE.</text>
</comment>
<comment type="similarity">
    <text evidence="3">Belongs to the GnRH family.</text>
</comment>